<name>CH10_ALKOO</name>
<organism>
    <name type="scientific">Alkaliphilus oremlandii (strain OhILAs)</name>
    <name type="common">Clostridium oremlandii (strain OhILAs)</name>
    <dbReference type="NCBI Taxonomy" id="350688"/>
    <lineage>
        <taxon>Bacteria</taxon>
        <taxon>Bacillati</taxon>
        <taxon>Bacillota</taxon>
        <taxon>Clostridia</taxon>
        <taxon>Peptostreptococcales</taxon>
        <taxon>Natronincolaceae</taxon>
        <taxon>Alkaliphilus</taxon>
    </lineage>
</organism>
<keyword id="KW-0143">Chaperone</keyword>
<keyword id="KW-0963">Cytoplasm</keyword>
<keyword id="KW-1185">Reference proteome</keyword>
<comment type="function">
    <text evidence="1">Together with the chaperonin GroEL, plays an essential role in assisting protein folding. The GroEL-GroES system forms a nano-cage that allows encapsulation of the non-native substrate proteins and provides a physical environment optimized to promote and accelerate protein folding. GroES binds to the apical surface of the GroEL ring, thereby capping the opening of the GroEL channel.</text>
</comment>
<comment type="subunit">
    <text evidence="1">Heptamer of 7 subunits arranged in a ring. Interacts with the chaperonin GroEL.</text>
</comment>
<comment type="subcellular location">
    <subcellularLocation>
        <location evidence="1">Cytoplasm</location>
    </subcellularLocation>
</comment>
<comment type="similarity">
    <text evidence="1">Belongs to the GroES chaperonin family.</text>
</comment>
<protein>
    <recommendedName>
        <fullName evidence="1">Co-chaperonin GroES</fullName>
    </recommendedName>
    <alternativeName>
        <fullName evidence="1">10 kDa chaperonin</fullName>
    </alternativeName>
    <alternativeName>
        <fullName evidence="1">Chaperonin-10</fullName>
        <shortName evidence="1">Cpn10</shortName>
    </alternativeName>
</protein>
<feature type="chain" id="PRO_1000061185" description="Co-chaperonin GroES">
    <location>
        <begin position="1"/>
        <end position="94"/>
    </location>
</feature>
<reference key="1">
    <citation type="submission" date="2007-10" db="EMBL/GenBank/DDBJ databases">
        <title>Complete genome of Alkaliphilus oremlandii OhILAs.</title>
        <authorList>
            <person name="Copeland A."/>
            <person name="Lucas S."/>
            <person name="Lapidus A."/>
            <person name="Barry K."/>
            <person name="Detter J.C."/>
            <person name="Glavina del Rio T."/>
            <person name="Hammon N."/>
            <person name="Israni S."/>
            <person name="Dalin E."/>
            <person name="Tice H."/>
            <person name="Pitluck S."/>
            <person name="Chain P."/>
            <person name="Malfatti S."/>
            <person name="Shin M."/>
            <person name="Vergez L."/>
            <person name="Schmutz J."/>
            <person name="Larimer F."/>
            <person name="Land M."/>
            <person name="Hauser L."/>
            <person name="Kyrpides N."/>
            <person name="Mikhailova N."/>
            <person name="Stolz J.F."/>
            <person name="Dawson A."/>
            <person name="Fisher E."/>
            <person name="Crable B."/>
            <person name="Perera E."/>
            <person name="Lisak J."/>
            <person name="Ranganathan M."/>
            <person name="Basu P."/>
            <person name="Richardson P."/>
        </authorList>
    </citation>
    <scope>NUCLEOTIDE SEQUENCE [LARGE SCALE GENOMIC DNA]</scope>
    <source>
        <strain>OhILAs</strain>
    </source>
</reference>
<gene>
    <name evidence="1" type="primary">groES</name>
    <name evidence="1" type="synonym">groS</name>
    <name type="ordered locus">Clos_2448</name>
</gene>
<dbReference type="EMBL" id="CP000853">
    <property type="protein sequence ID" value="ABW19980.1"/>
    <property type="molecule type" value="Genomic_DNA"/>
</dbReference>
<dbReference type="RefSeq" id="WP_012160287.1">
    <property type="nucleotide sequence ID" value="NC_009922.1"/>
</dbReference>
<dbReference type="SMR" id="A8MJJ8"/>
<dbReference type="STRING" id="350688.Clos_2448"/>
<dbReference type="KEGG" id="aoe:Clos_2448"/>
<dbReference type="eggNOG" id="COG0234">
    <property type="taxonomic scope" value="Bacteria"/>
</dbReference>
<dbReference type="HOGENOM" id="CLU_132825_2_0_9"/>
<dbReference type="OrthoDB" id="9806791at2"/>
<dbReference type="Proteomes" id="UP000000269">
    <property type="component" value="Chromosome"/>
</dbReference>
<dbReference type="GO" id="GO:0005737">
    <property type="term" value="C:cytoplasm"/>
    <property type="evidence" value="ECO:0007669"/>
    <property type="project" value="UniProtKB-SubCell"/>
</dbReference>
<dbReference type="GO" id="GO:0005524">
    <property type="term" value="F:ATP binding"/>
    <property type="evidence" value="ECO:0007669"/>
    <property type="project" value="InterPro"/>
</dbReference>
<dbReference type="GO" id="GO:0046872">
    <property type="term" value="F:metal ion binding"/>
    <property type="evidence" value="ECO:0007669"/>
    <property type="project" value="TreeGrafter"/>
</dbReference>
<dbReference type="GO" id="GO:0044183">
    <property type="term" value="F:protein folding chaperone"/>
    <property type="evidence" value="ECO:0007669"/>
    <property type="project" value="InterPro"/>
</dbReference>
<dbReference type="GO" id="GO:0051087">
    <property type="term" value="F:protein-folding chaperone binding"/>
    <property type="evidence" value="ECO:0007669"/>
    <property type="project" value="TreeGrafter"/>
</dbReference>
<dbReference type="GO" id="GO:0051082">
    <property type="term" value="F:unfolded protein binding"/>
    <property type="evidence" value="ECO:0007669"/>
    <property type="project" value="TreeGrafter"/>
</dbReference>
<dbReference type="GO" id="GO:0051085">
    <property type="term" value="P:chaperone cofactor-dependent protein refolding"/>
    <property type="evidence" value="ECO:0007669"/>
    <property type="project" value="TreeGrafter"/>
</dbReference>
<dbReference type="CDD" id="cd00320">
    <property type="entry name" value="cpn10"/>
    <property type="match status" value="1"/>
</dbReference>
<dbReference type="FunFam" id="2.30.33.40:FF:000001">
    <property type="entry name" value="10 kDa chaperonin"/>
    <property type="match status" value="1"/>
</dbReference>
<dbReference type="Gene3D" id="2.30.33.40">
    <property type="entry name" value="GroES chaperonin"/>
    <property type="match status" value="1"/>
</dbReference>
<dbReference type="HAMAP" id="MF_00580">
    <property type="entry name" value="CH10"/>
    <property type="match status" value="1"/>
</dbReference>
<dbReference type="InterPro" id="IPR020818">
    <property type="entry name" value="Chaperonin_GroES"/>
</dbReference>
<dbReference type="InterPro" id="IPR037124">
    <property type="entry name" value="Chaperonin_GroES_sf"/>
</dbReference>
<dbReference type="InterPro" id="IPR018369">
    <property type="entry name" value="Chaprnonin_Cpn10_CS"/>
</dbReference>
<dbReference type="InterPro" id="IPR011032">
    <property type="entry name" value="GroES-like_sf"/>
</dbReference>
<dbReference type="NCBIfam" id="NF001531">
    <property type="entry name" value="PRK00364.2-2"/>
    <property type="match status" value="1"/>
</dbReference>
<dbReference type="NCBIfam" id="NF001533">
    <property type="entry name" value="PRK00364.2-4"/>
    <property type="match status" value="1"/>
</dbReference>
<dbReference type="NCBIfam" id="NF001534">
    <property type="entry name" value="PRK00364.2-5"/>
    <property type="match status" value="1"/>
</dbReference>
<dbReference type="PANTHER" id="PTHR10772">
    <property type="entry name" value="10 KDA HEAT SHOCK PROTEIN"/>
    <property type="match status" value="1"/>
</dbReference>
<dbReference type="PANTHER" id="PTHR10772:SF58">
    <property type="entry name" value="CO-CHAPERONIN GROES"/>
    <property type="match status" value="1"/>
</dbReference>
<dbReference type="Pfam" id="PF00166">
    <property type="entry name" value="Cpn10"/>
    <property type="match status" value="1"/>
</dbReference>
<dbReference type="PRINTS" id="PR00297">
    <property type="entry name" value="CHAPERONIN10"/>
</dbReference>
<dbReference type="SMART" id="SM00883">
    <property type="entry name" value="Cpn10"/>
    <property type="match status" value="1"/>
</dbReference>
<dbReference type="SUPFAM" id="SSF50129">
    <property type="entry name" value="GroES-like"/>
    <property type="match status" value="1"/>
</dbReference>
<dbReference type="PROSITE" id="PS00681">
    <property type="entry name" value="CHAPERONINS_CPN10"/>
    <property type="match status" value="1"/>
</dbReference>
<evidence type="ECO:0000255" key="1">
    <source>
        <dbReference type="HAMAP-Rule" id="MF_00580"/>
    </source>
</evidence>
<sequence length="94" mass="10088">MNIKPLGDRVVIKRVEAEETTKSGIVLPGSAKEQPQLAEVMAVGPGGVIEGKEVVMEVKVGDKVIFSKYAGTEVKFDGVEYTILKQSDILAVVE</sequence>
<proteinExistence type="inferred from homology"/>
<accession>A8MJJ8</accession>